<gene>
    <name type="ordered locus">YPN_1328</name>
    <name type="ORF">YP516_1462</name>
</gene>
<feature type="chain" id="PRO_5000115241" description="UPF0756 membrane protein YPN_1328">
    <location>
        <begin position="1"/>
        <end position="150"/>
    </location>
</feature>
<feature type="transmembrane region" description="Helical" evidence="1">
    <location>
        <begin position="16"/>
        <end position="36"/>
    </location>
</feature>
<feature type="transmembrane region" description="Helical" evidence="1">
    <location>
        <begin position="51"/>
        <end position="71"/>
    </location>
</feature>
<feature type="transmembrane region" description="Helical" evidence="1">
    <location>
        <begin position="88"/>
        <end position="108"/>
    </location>
</feature>
<feature type="transmembrane region" description="Helical" evidence="1">
    <location>
        <begin position="114"/>
        <end position="134"/>
    </location>
</feature>
<comment type="subcellular location">
    <subcellularLocation>
        <location evidence="1">Cell membrane</location>
        <topology evidence="1">Multi-pass membrane protein</topology>
    </subcellularLocation>
</comment>
<comment type="similarity">
    <text evidence="1">Belongs to the UPF0756 family.</text>
</comment>
<protein>
    <recommendedName>
        <fullName evidence="1">UPF0756 membrane protein YPN_1328</fullName>
    </recommendedName>
</protein>
<organism>
    <name type="scientific">Yersinia pestis bv. Antiqua (strain Nepal516)</name>
    <dbReference type="NCBI Taxonomy" id="377628"/>
    <lineage>
        <taxon>Bacteria</taxon>
        <taxon>Pseudomonadati</taxon>
        <taxon>Pseudomonadota</taxon>
        <taxon>Gammaproteobacteria</taxon>
        <taxon>Enterobacterales</taxon>
        <taxon>Yersiniaceae</taxon>
        <taxon>Yersinia</taxon>
    </lineage>
</organism>
<sequence>MAALDPTLLILLALAALGILSHNMTVTLAILILIAIRITPLNSFFPWVEKYGLTIGVLILTIGVMAPIASGKISASEVLHSFVQWKSILAIVVGVAVSWLGGRGVSLMTHQPSVVAGLLVGTVLGVALFKGVPVGPLIAAGLLSLVIGKS</sequence>
<dbReference type="EMBL" id="CP000305">
    <property type="protein sequence ID" value="ABG17658.1"/>
    <property type="molecule type" value="Genomic_DNA"/>
</dbReference>
<dbReference type="EMBL" id="ACNQ01000008">
    <property type="protein sequence ID" value="EEO77775.1"/>
    <property type="molecule type" value="Genomic_DNA"/>
</dbReference>
<dbReference type="RefSeq" id="WP_002208553.1">
    <property type="nucleotide sequence ID" value="NZ_ACNQ01000008.1"/>
</dbReference>
<dbReference type="KEGG" id="ypn:YPN_1328"/>
<dbReference type="HOGENOM" id="CLU_125889_0_0_6"/>
<dbReference type="Proteomes" id="UP000008936">
    <property type="component" value="Chromosome"/>
</dbReference>
<dbReference type="GO" id="GO:0005886">
    <property type="term" value="C:plasma membrane"/>
    <property type="evidence" value="ECO:0007669"/>
    <property type="project" value="UniProtKB-SubCell"/>
</dbReference>
<dbReference type="HAMAP" id="MF_01874">
    <property type="entry name" value="UPF0756"/>
    <property type="match status" value="1"/>
</dbReference>
<dbReference type="InterPro" id="IPR007382">
    <property type="entry name" value="UPF0756_TM"/>
</dbReference>
<dbReference type="PANTHER" id="PTHR38452">
    <property type="entry name" value="UPF0756 MEMBRANE PROTEIN YEAL"/>
    <property type="match status" value="1"/>
</dbReference>
<dbReference type="PANTHER" id="PTHR38452:SF1">
    <property type="entry name" value="UPF0756 MEMBRANE PROTEIN YEAL"/>
    <property type="match status" value="1"/>
</dbReference>
<dbReference type="Pfam" id="PF04284">
    <property type="entry name" value="DUF441"/>
    <property type="match status" value="1"/>
</dbReference>
<accession>Q1CK22</accession>
<name>Y1328_YERPN</name>
<evidence type="ECO:0000255" key="1">
    <source>
        <dbReference type="HAMAP-Rule" id="MF_01874"/>
    </source>
</evidence>
<proteinExistence type="inferred from homology"/>
<reference key="1">
    <citation type="journal article" date="2006" name="J. Bacteriol.">
        <title>Complete genome sequence of Yersinia pestis strains Antiqua and Nepal516: evidence of gene reduction in an emerging pathogen.</title>
        <authorList>
            <person name="Chain P.S.G."/>
            <person name="Hu P."/>
            <person name="Malfatti S.A."/>
            <person name="Radnedge L."/>
            <person name="Larimer F."/>
            <person name="Vergez L.M."/>
            <person name="Worsham P."/>
            <person name="Chu M.C."/>
            <person name="Andersen G.L."/>
        </authorList>
    </citation>
    <scope>NUCLEOTIDE SEQUENCE [LARGE SCALE GENOMIC DNA]</scope>
    <source>
        <strain>Nepal516</strain>
    </source>
</reference>
<reference key="2">
    <citation type="submission" date="2009-04" db="EMBL/GenBank/DDBJ databases">
        <title>Yersinia pestis Nepal516A whole genome shotgun sequencing project.</title>
        <authorList>
            <person name="Plunkett G. III"/>
            <person name="Anderson B.D."/>
            <person name="Baumler D.J."/>
            <person name="Burland V."/>
            <person name="Cabot E.L."/>
            <person name="Glasner J.D."/>
            <person name="Mau B."/>
            <person name="Neeno-Eckwall E."/>
            <person name="Perna N.T."/>
            <person name="Munk A.C."/>
            <person name="Tapia R."/>
            <person name="Green L.D."/>
            <person name="Rogers Y.C."/>
            <person name="Detter J.C."/>
            <person name="Bruce D.C."/>
            <person name="Brettin T.S."/>
        </authorList>
    </citation>
    <scope>NUCLEOTIDE SEQUENCE [LARGE SCALE GENOMIC DNA]</scope>
    <source>
        <strain>Nepal516</strain>
    </source>
</reference>
<keyword id="KW-1003">Cell membrane</keyword>
<keyword id="KW-0472">Membrane</keyword>
<keyword id="KW-0812">Transmembrane</keyword>
<keyword id="KW-1133">Transmembrane helix</keyword>